<comment type="function">
    <text>Probable transcription factor involved in muscle spindle development.</text>
</comment>
<comment type="subcellular location">
    <subcellularLocation>
        <location evidence="3">Nucleus</location>
    </subcellularLocation>
</comment>
<comment type="similarity">
    <text evidence="3">Belongs to the EGR C2H2-type zinc-finger protein family.</text>
</comment>
<dbReference type="EMBL" id="AF132128">
    <property type="protein sequence ID" value="AAD28261.1"/>
    <property type="molecule type" value="mRNA"/>
</dbReference>
<dbReference type="EMBL" id="S40835">
    <property type="protein sequence ID" value="AAB19318.1"/>
    <property type="molecule type" value="mRNA"/>
</dbReference>
<dbReference type="CCDS" id="CCDS27246.1"/>
<dbReference type="PIR" id="B43819">
    <property type="entry name" value="B43819"/>
</dbReference>
<dbReference type="RefSeq" id="NP_061251.1">
    <property type="nucleotide sequence ID" value="NM_018781.4"/>
</dbReference>
<dbReference type="SMR" id="P43300"/>
<dbReference type="FunCoup" id="P43300">
    <property type="interactions" value="360"/>
</dbReference>
<dbReference type="STRING" id="10090.ENSMUSP00000153491"/>
<dbReference type="GlyGen" id="P43300">
    <property type="glycosylation" value="2 sites, 1 O-linked glycan (2 sites)"/>
</dbReference>
<dbReference type="iPTMnet" id="P43300"/>
<dbReference type="PhosphoSitePlus" id="P43300"/>
<dbReference type="PaxDb" id="10090-ENSMUSP00000037042"/>
<dbReference type="ProteomicsDB" id="277733"/>
<dbReference type="Antibodypedia" id="22692">
    <property type="antibodies" value="229 antibodies from 28 providers"/>
</dbReference>
<dbReference type="DNASU" id="13655"/>
<dbReference type="Ensembl" id="ENSMUST00000225200.2">
    <property type="protein sequence ID" value="ENSMUSP00000153491.2"/>
    <property type="gene ID" value="ENSMUSG00000033730.5"/>
</dbReference>
<dbReference type="GeneID" id="13655"/>
<dbReference type="KEGG" id="mmu:13655"/>
<dbReference type="UCSC" id="uc007unb.2">
    <property type="organism name" value="mouse"/>
</dbReference>
<dbReference type="AGR" id="MGI:1306780"/>
<dbReference type="CTD" id="1960"/>
<dbReference type="MGI" id="MGI:1306780">
    <property type="gene designation" value="Egr3"/>
</dbReference>
<dbReference type="VEuPathDB" id="HostDB:ENSMUSG00000033730"/>
<dbReference type="eggNOG" id="KOG1721">
    <property type="taxonomic scope" value="Eukaryota"/>
</dbReference>
<dbReference type="GeneTree" id="ENSGT00940000160355"/>
<dbReference type="HOGENOM" id="CLU_043235_0_0_1"/>
<dbReference type="InParanoid" id="P43300"/>
<dbReference type="OMA" id="GEVEPMY"/>
<dbReference type="OrthoDB" id="8197458at2759"/>
<dbReference type="PhylomeDB" id="P43300"/>
<dbReference type="TreeFam" id="TF318980"/>
<dbReference type="BioGRID-ORCS" id="13655">
    <property type="hits" value="1 hit in 77 CRISPR screens"/>
</dbReference>
<dbReference type="PRO" id="PR:P43300"/>
<dbReference type="Proteomes" id="UP000000589">
    <property type="component" value="Chromosome 14"/>
</dbReference>
<dbReference type="RNAct" id="P43300">
    <property type="molecule type" value="protein"/>
</dbReference>
<dbReference type="Bgee" id="ENSMUSG00000033730">
    <property type="expression patterns" value="Expressed in prefrontal cortex and 165 other cell types or tissues"/>
</dbReference>
<dbReference type="ExpressionAtlas" id="P43300">
    <property type="expression patterns" value="baseline and differential"/>
</dbReference>
<dbReference type="GO" id="GO:0005654">
    <property type="term" value="C:nucleoplasm"/>
    <property type="evidence" value="ECO:0000304"/>
    <property type="project" value="Reactome"/>
</dbReference>
<dbReference type="GO" id="GO:0045202">
    <property type="term" value="C:synapse"/>
    <property type="evidence" value="ECO:0007669"/>
    <property type="project" value="GOC"/>
</dbReference>
<dbReference type="GO" id="GO:0001228">
    <property type="term" value="F:DNA-binding transcription activator activity, RNA polymerase II-specific"/>
    <property type="evidence" value="ECO:0000314"/>
    <property type="project" value="NTNU_SB"/>
</dbReference>
<dbReference type="GO" id="GO:0043565">
    <property type="term" value="F:sequence-specific DNA binding"/>
    <property type="evidence" value="ECO:0000314"/>
    <property type="project" value="NTNU_SB"/>
</dbReference>
<dbReference type="GO" id="GO:1990837">
    <property type="term" value="F:sequence-specific double-stranded DNA binding"/>
    <property type="evidence" value="ECO:0007669"/>
    <property type="project" value="Ensembl"/>
</dbReference>
<dbReference type="GO" id="GO:0008270">
    <property type="term" value="F:zinc ion binding"/>
    <property type="evidence" value="ECO:0007669"/>
    <property type="project" value="UniProtKB-KW"/>
</dbReference>
<dbReference type="GO" id="GO:0002042">
    <property type="term" value="P:cell migration involved in sprouting angiogenesis"/>
    <property type="evidence" value="ECO:0007669"/>
    <property type="project" value="Ensembl"/>
</dbReference>
<dbReference type="GO" id="GO:0044344">
    <property type="term" value="P:cellular response to fibroblast growth factor stimulus"/>
    <property type="evidence" value="ECO:0007669"/>
    <property type="project" value="Ensembl"/>
</dbReference>
<dbReference type="GO" id="GO:0035924">
    <property type="term" value="P:cellular response to vascular endothelial growth factor stimulus"/>
    <property type="evidence" value="ECO:0007669"/>
    <property type="project" value="Ensembl"/>
</dbReference>
<dbReference type="GO" id="GO:0035767">
    <property type="term" value="P:endothelial cell chemotaxis"/>
    <property type="evidence" value="ECO:0007669"/>
    <property type="project" value="Ensembl"/>
</dbReference>
<dbReference type="GO" id="GO:0043066">
    <property type="term" value="P:negative regulation of apoptotic process"/>
    <property type="evidence" value="ECO:0007669"/>
    <property type="project" value="Ensembl"/>
</dbReference>
<dbReference type="GO" id="GO:0007274">
    <property type="term" value="P:neuromuscular synaptic transmission"/>
    <property type="evidence" value="ECO:0000315"/>
    <property type="project" value="MGI"/>
</dbReference>
<dbReference type="GO" id="GO:0007422">
    <property type="term" value="P:peripheral nervous system development"/>
    <property type="evidence" value="ECO:0000315"/>
    <property type="project" value="MGI"/>
</dbReference>
<dbReference type="GO" id="GO:0001938">
    <property type="term" value="P:positive regulation of endothelial cell proliferation"/>
    <property type="evidence" value="ECO:0007669"/>
    <property type="project" value="Ensembl"/>
</dbReference>
<dbReference type="GO" id="GO:0033089">
    <property type="term" value="P:positive regulation of T cell differentiation in thymus"/>
    <property type="evidence" value="ECO:0000315"/>
    <property type="project" value="MGI"/>
</dbReference>
<dbReference type="GO" id="GO:0045944">
    <property type="term" value="P:positive regulation of transcription by RNA polymerase II"/>
    <property type="evidence" value="ECO:0000314"/>
    <property type="project" value="NTNU_SB"/>
</dbReference>
<dbReference type="GO" id="GO:0045586">
    <property type="term" value="P:regulation of gamma-delta T cell differentiation"/>
    <property type="evidence" value="ECO:0000314"/>
    <property type="project" value="MGI"/>
</dbReference>
<dbReference type="FunFam" id="3.30.160.60:FF:000392">
    <property type="entry name" value="early growth response protein 3"/>
    <property type="match status" value="1"/>
</dbReference>
<dbReference type="FunFam" id="3.30.160.60:FF:000324">
    <property type="entry name" value="Early growth response protein 4"/>
    <property type="match status" value="1"/>
</dbReference>
<dbReference type="FunFam" id="3.30.160.60:FF:000419">
    <property type="entry name" value="Early growth response protein 4"/>
    <property type="match status" value="1"/>
</dbReference>
<dbReference type="Gene3D" id="3.30.160.60">
    <property type="entry name" value="Classic Zinc Finger"/>
    <property type="match status" value="3"/>
</dbReference>
<dbReference type="InterPro" id="IPR021849">
    <property type="entry name" value="EGR_N"/>
</dbReference>
<dbReference type="InterPro" id="IPR036236">
    <property type="entry name" value="Znf_C2H2_sf"/>
</dbReference>
<dbReference type="InterPro" id="IPR013087">
    <property type="entry name" value="Znf_C2H2_type"/>
</dbReference>
<dbReference type="PANTHER" id="PTHR23235:SF78">
    <property type="entry name" value="EARLY GROWTH RESPONSE PROTEIN 3"/>
    <property type="match status" value="1"/>
</dbReference>
<dbReference type="PANTHER" id="PTHR23235">
    <property type="entry name" value="KRUEPPEL-LIKE TRANSCRIPTION FACTOR"/>
    <property type="match status" value="1"/>
</dbReference>
<dbReference type="Pfam" id="PF11928">
    <property type="entry name" value="DUF3446"/>
    <property type="match status" value="1"/>
</dbReference>
<dbReference type="Pfam" id="PF00096">
    <property type="entry name" value="zf-C2H2"/>
    <property type="match status" value="3"/>
</dbReference>
<dbReference type="SMART" id="SM00355">
    <property type="entry name" value="ZnF_C2H2"/>
    <property type="match status" value="3"/>
</dbReference>
<dbReference type="SUPFAM" id="SSF57667">
    <property type="entry name" value="beta-beta-alpha zinc fingers"/>
    <property type="match status" value="2"/>
</dbReference>
<dbReference type="PROSITE" id="PS00028">
    <property type="entry name" value="ZINC_FINGER_C2H2_1"/>
    <property type="match status" value="3"/>
</dbReference>
<dbReference type="PROSITE" id="PS50157">
    <property type="entry name" value="ZINC_FINGER_C2H2_2"/>
    <property type="match status" value="3"/>
</dbReference>
<proteinExistence type="evidence at transcript level"/>
<accession>P43300</accession>
<accession>Q9R276</accession>
<keyword id="KW-0238">DNA-binding</keyword>
<keyword id="KW-0479">Metal-binding</keyword>
<keyword id="KW-0539">Nucleus</keyword>
<keyword id="KW-1185">Reference proteome</keyword>
<keyword id="KW-0677">Repeat</keyword>
<keyword id="KW-0804">Transcription</keyword>
<keyword id="KW-0805">Transcription regulation</keyword>
<keyword id="KW-0862">Zinc</keyword>
<keyword id="KW-0863">Zinc-finger</keyword>
<feature type="chain" id="PRO_0000047126" description="Early growth response protein 3">
    <location>
        <begin position="1"/>
        <end position="387"/>
    </location>
</feature>
<feature type="zinc finger region" description="C2H2-type 1" evidence="1">
    <location>
        <begin position="275"/>
        <end position="299"/>
    </location>
</feature>
<feature type="zinc finger region" description="C2H2-type 2" evidence="1">
    <location>
        <begin position="305"/>
        <end position="327"/>
    </location>
</feature>
<feature type="zinc finger region" description="C2H2-type 3" evidence="1">
    <location>
        <begin position="333"/>
        <end position="355"/>
    </location>
</feature>
<feature type="region of interest" description="Disordered" evidence="2">
    <location>
        <begin position="241"/>
        <end position="283"/>
    </location>
</feature>
<feature type="region of interest" description="Disordered" evidence="2">
    <location>
        <begin position="348"/>
        <end position="387"/>
    </location>
</feature>
<feature type="compositionally biased region" description="Basic and acidic residues" evidence="2">
    <location>
        <begin position="269"/>
        <end position="283"/>
    </location>
</feature>
<feature type="compositionally biased region" description="Basic residues" evidence="2">
    <location>
        <begin position="350"/>
        <end position="360"/>
    </location>
</feature>
<feature type="sequence conflict" description="In Ref. 2." evidence="3" ref="2">
    <original>IR</original>
    <variation>TH</variation>
    <location>
        <begin position="324"/>
        <end position="325"/>
    </location>
</feature>
<gene>
    <name type="primary">Egr3</name>
    <name type="synonym">Egr-3</name>
</gene>
<reference key="1">
    <citation type="journal article" date="1998" name="Nat. Genet.">
        <title>Sensory ataxia and muscle spindle agenesis in mice lacking the transcription factor Egr3.</title>
        <authorList>
            <person name="Tourtellotte W.G."/>
            <person name="Milbrandt J."/>
        </authorList>
    </citation>
    <scope>NUCLEOTIDE SEQUENCE [MRNA]</scope>
</reference>
<reference key="2">
    <citation type="journal article" date="1991" name="Oncogene">
        <title>EGR3, a novel member of the Egr family of genes encoding immediate-early transcription factors.</title>
        <authorList>
            <person name="Patwardhan S."/>
            <person name="Gashler A."/>
            <person name="Siegel M.G."/>
            <person name="Chang L.C."/>
            <person name="Joseph L.J."/>
            <person name="Shows T.B."/>
            <person name="le Beau M.M."/>
            <person name="Sukhatme V.P."/>
        </authorList>
    </citation>
    <scope>NUCLEOTIDE SEQUENCE [MRNA] OF 32-327</scope>
</reference>
<evidence type="ECO:0000255" key="1">
    <source>
        <dbReference type="PROSITE-ProRule" id="PRU00042"/>
    </source>
</evidence>
<evidence type="ECO:0000256" key="2">
    <source>
        <dbReference type="SAM" id="MobiDB-lite"/>
    </source>
</evidence>
<evidence type="ECO:0000305" key="3"/>
<name>EGR3_MOUSE</name>
<organism>
    <name type="scientific">Mus musculus</name>
    <name type="common">Mouse</name>
    <dbReference type="NCBI Taxonomy" id="10090"/>
    <lineage>
        <taxon>Eukaryota</taxon>
        <taxon>Metazoa</taxon>
        <taxon>Chordata</taxon>
        <taxon>Craniata</taxon>
        <taxon>Vertebrata</taxon>
        <taxon>Euteleostomi</taxon>
        <taxon>Mammalia</taxon>
        <taxon>Eutheria</taxon>
        <taxon>Euarchontoglires</taxon>
        <taxon>Glires</taxon>
        <taxon>Rodentia</taxon>
        <taxon>Myomorpha</taxon>
        <taxon>Muroidea</taxon>
        <taxon>Muridae</taxon>
        <taxon>Murinae</taxon>
        <taxon>Mus</taxon>
        <taxon>Mus</taxon>
    </lineage>
</organism>
<protein>
    <recommendedName>
        <fullName>Early growth response protein 3</fullName>
        <shortName>EGR-3</shortName>
    </recommendedName>
</protein>
<sequence length="387" mass="42635">MTGKLAEKLPVTMSSLLNQLPDNLYPEEIPSALNLFSGSSDSVAHYNQMATENVMDIGLTNEKPNPELSYSSSFQPAPGNKTVTYLGKFAFDSPSNWCQDNIISLMSAGILGVPPASGALSTQTSTASMVQPPQGDVEAMYPALPPYSNCGDLYSEPVSFHDPQGNPGLAYSPQDYQSAKPALDSNLFPMIPDYNLYHHPNDMGSIPEHKPFQGMDPIRVNPPPITPLETIKAFKDKQIHPGFGSLPQPPLTLKPIRPRKYPNRPSKTPLHERPHACPAEGCDRRFSRSDELTRHLRIHTGHKPFQCRICMRSFSRSDHLTTHIRTHTGEKPFACEFCGRKFARSDERKRHAKIHLKQKEKKSEKGGAPSASSAPTVSLAPVVTTCA</sequence>